<proteinExistence type="inferred from homology"/>
<organism>
    <name type="scientific">Halobacterium salinarum (strain ATCC 700922 / JCM 11081 / NRC-1)</name>
    <name type="common">Halobacterium halobium</name>
    <dbReference type="NCBI Taxonomy" id="64091"/>
    <lineage>
        <taxon>Archaea</taxon>
        <taxon>Methanobacteriati</taxon>
        <taxon>Methanobacteriota</taxon>
        <taxon>Stenosarchaea group</taxon>
        <taxon>Halobacteria</taxon>
        <taxon>Halobacteriales</taxon>
        <taxon>Halobacteriaceae</taxon>
        <taxon>Halobacterium</taxon>
        <taxon>Halobacterium salinarum NRC-34001</taxon>
    </lineage>
</organism>
<reference key="1">
    <citation type="journal article" date="2000" name="Proc. Natl. Acad. Sci. U.S.A.">
        <title>Genome sequence of Halobacterium species NRC-1.</title>
        <authorList>
            <person name="Ng W.V."/>
            <person name="Kennedy S.P."/>
            <person name="Mahairas G.G."/>
            <person name="Berquist B."/>
            <person name="Pan M."/>
            <person name="Shukla H.D."/>
            <person name="Lasky S.R."/>
            <person name="Baliga N.S."/>
            <person name="Thorsson V."/>
            <person name="Sbrogna J."/>
            <person name="Swartzell S."/>
            <person name="Weir D."/>
            <person name="Hall J."/>
            <person name="Dahl T.A."/>
            <person name="Welti R."/>
            <person name="Goo Y.A."/>
            <person name="Leithauser B."/>
            <person name="Keller K."/>
            <person name="Cruz R."/>
            <person name="Danson M.J."/>
            <person name="Hough D.W."/>
            <person name="Maddocks D.G."/>
            <person name="Jablonski P.E."/>
            <person name="Krebs M.P."/>
            <person name="Angevine C.M."/>
            <person name="Dale H."/>
            <person name="Isenbarger T.A."/>
            <person name="Peck R.F."/>
            <person name="Pohlschroder M."/>
            <person name="Spudich J.L."/>
            <person name="Jung K.-H."/>
            <person name="Alam M."/>
            <person name="Freitas T."/>
            <person name="Hou S."/>
            <person name="Daniels C.J."/>
            <person name="Dennis P.P."/>
            <person name="Omer A.D."/>
            <person name="Ebhardt H."/>
            <person name="Lowe T.M."/>
            <person name="Liang P."/>
            <person name="Riley M."/>
            <person name="Hood L."/>
            <person name="DasSarma S."/>
        </authorList>
    </citation>
    <scope>NUCLEOTIDE SEQUENCE [LARGE SCALE GENOMIC DNA]</scope>
    <source>
        <strain>ATCC 700922 / JCM 11081 / NRC-1</strain>
    </source>
</reference>
<comment type="function">
    <text evidence="1">Essential subunit of the Sec protein translocation channel SecYEG. Clamps together the 2 halves of SecY. May contact the channel plug during translocation.</text>
</comment>
<comment type="subunit">
    <text evidence="1">Component of the Sec protein translocase complex. Heterotrimer consisting of SecY (alpha), SecG (beta) and SecE (gamma) subunits. The heterotrimers can form oligomers, although 1 heterotrimer is thought to be able to translocate proteins. Interacts with the ribosome. May interact with SecDF, and other proteins may be involved.</text>
</comment>
<comment type="subcellular location">
    <subcellularLocation>
        <location evidence="1">Cell membrane</location>
        <topology evidence="1">Single-pass membrane protein</topology>
    </subcellularLocation>
</comment>
<comment type="similarity">
    <text evidence="1">Belongs to the SecE/SEC61-gamma family.</text>
</comment>
<gene>
    <name evidence="1" type="primary">secE</name>
    <name type="ordered locus">VNG_0375G</name>
</gene>
<sequence length="57" mass="6049">MDVPLELSAYTRVLRLASTPSWEEFSQIAKIAGAGILLIGAIGFLVFLIMGGIVSVI</sequence>
<keyword id="KW-1003">Cell membrane</keyword>
<keyword id="KW-0472">Membrane</keyword>
<keyword id="KW-0653">Protein transport</keyword>
<keyword id="KW-1185">Reference proteome</keyword>
<keyword id="KW-0811">Translocation</keyword>
<keyword id="KW-0812">Transmembrane</keyword>
<keyword id="KW-1133">Transmembrane helix</keyword>
<keyword id="KW-0813">Transport</keyword>
<name>SECE_HALSA</name>
<dbReference type="EMBL" id="AE004437">
    <property type="protein sequence ID" value="AAG18936.1"/>
    <property type="molecule type" value="Genomic_DNA"/>
</dbReference>
<dbReference type="PIR" id="D84196">
    <property type="entry name" value="D84196"/>
</dbReference>
<dbReference type="RefSeq" id="WP_010902231.1">
    <property type="nucleotide sequence ID" value="NC_002607.1"/>
</dbReference>
<dbReference type="SMR" id="Q9HS72"/>
<dbReference type="STRING" id="64091.VNG_0375G"/>
<dbReference type="PaxDb" id="64091-VNG_0375G"/>
<dbReference type="KEGG" id="hal:VNG_0375G"/>
<dbReference type="PATRIC" id="fig|64091.14.peg.279"/>
<dbReference type="HOGENOM" id="CLU_191921_2_0_2"/>
<dbReference type="InParanoid" id="Q9HS72"/>
<dbReference type="Proteomes" id="UP000000554">
    <property type="component" value="Chromosome"/>
</dbReference>
<dbReference type="GO" id="GO:0005886">
    <property type="term" value="C:plasma membrane"/>
    <property type="evidence" value="ECO:0007669"/>
    <property type="project" value="UniProtKB-SubCell"/>
</dbReference>
<dbReference type="GO" id="GO:0008320">
    <property type="term" value="F:protein transmembrane transporter activity"/>
    <property type="evidence" value="ECO:0007669"/>
    <property type="project" value="UniProtKB-UniRule"/>
</dbReference>
<dbReference type="GO" id="GO:0065002">
    <property type="term" value="P:intracellular protein transmembrane transport"/>
    <property type="evidence" value="ECO:0007669"/>
    <property type="project" value="UniProtKB-UniRule"/>
</dbReference>
<dbReference type="GO" id="GO:0009306">
    <property type="term" value="P:protein secretion"/>
    <property type="evidence" value="ECO:0007669"/>
    <property type="project" value="UniProtKB-UniRule"/>
</dbReference>
<dbReference type="GO" id="GO:0006605">
    <property type="term" value="P:protein targeting"/>
    <property type="evidence" value="ECO:0007669"/>
    <property type="project" value="UniProtKB-UniRule"/>
</dbReference>
<dbReference type="Gene3D" id="1.20.5.820">
    <property type="entry name" value="Preprotein translocase SecE subunit"/>
    <property type="match status" value="1"/>
</dbReference>
<dbReference type="HAMAP" id="MF_00422">
    <property type="entry name" value="SecE"/>
    <property type="match status" value="1"/>
</dbReference>
<dbReference type="InterPro" id="IPR023391">
    <property type="entry name" value="Prot_translocase_SecE_dom_sf"/>
</dbReference>
<dbReference type="InterPro" id="IPR008158">
    <property type="entry name" value="Translocase_Sec61-g"/>
</dbReference>
<dbReference type="InterPro" id="IPR001901">
    <property type="entry name" value="Translocase_SecE/Sec61-g"/>
</dbReference>
<dbReference type="NCBIfam" id="NF006910">
    <property type="entry name" value="PRK09400.1-6"/>
    <property type="match status" value="1"/>
</dbReference>
<dbReference type="NCBIfam" id="TIGR00327">
    <property type="entry name" value="secE_euk_arch"/>
    <property type="match status" value="1"/>
</dbReference>
<dbReference type="SUPFAM" id="SSF103456">
    <property type="entry name" value="Preprotein translocase SecE subunit"/>
    <property type="match status" value="1"/>
</dbReference>
<evidence type="ECO:0000255" key="1">
    <source>
        <dbReference type="HAMAP-Rule" id="MF_00422"/>
    </source>
</evidence>
<feature type="chain" id="PRO_0000104217" description="Protein translocase subunit SecE">
    <location>
        <begin position="1"/>
        <end position="57"/>
    </location>
</feature>
<feature type="transmembrane region" description="Helical" evidence="1">
    <location>
        <begin position="34"/>
        <end position="54"/>
    </location>
</feature>
<accession>Q9HS72</accession>
<protein>
    <recommendedName>
        <fullName evidence="1">Protein translocase subunit SecE</fullName>
    </recommendedName>
    <alternativeName>
        <fullName evidence="1">Protein transport protein Sec61 gamma subunit homolog</fullName>
    </alternativeName>
</protein>